<evidence type="ECO:0000255" key="1"/>
<evidence type="ECO:0000256" key="2">
    <source>
        <dbReference type="SAM" id="MobiDB-lite"/>
    </source>
</evidence>
<evidence type="ECO:0000305" key="3"/>
<protein>
    <recommendedName>
        <fullName>Probable phosphatidate cytidylyltransferase</fullName>
        <ecNumber>2.7.7.41</ecNumber>
    </recommendedName>
    <alternativeName>
        <fullName>CDP-DAG synthase</fullName>
    </alternativeName>
    <alternativeName>
        <fullName>CDP-DG synthase</fullName>
    </alternativeName>
    <alternativeName>
        <fullName>CDP-diacylglycerol synthase</fullName>
        <shortName>CDS</shortName>
    </alternativeName>
    <alternativeName>
        <fullName>CDP-diglyceride pyrophosphorylase</fullName>
    </alternativeName>
    <alternativeName>
        <fullName>CDP-diglyceride synthase</fullName>
    </alternativeName>
    <alternativeName>
        <fullName>CTP:phosphatidate cytidylyltransferase</fullName>
    </alternativeName>
</protein>
<proteinExistence type="inferred from homology"/>
<keyword id="KW-0444">Lipid biosynthesis</keyword>
<keyword id="KW-0443">Lipid metabolism</keyword>
<keyword id="KW-0472">Membrane</keyword>
<keyword id="KW-0548">Nucleotidyltransferase</keyword>
<keyword id="KW-0594">Phospholipid biosynthesis</keyword>
<keyword id="KW-1208">Phospholipid metabolism</keyword>
<keyword id="KW-1185">Reference proteome</keyword>
<keyword id="KW-0808">Transferase</keyword>
<keyword id="KW-0812">Transmembrane</keyword>
<keyword id="KW-1133">Transmembrane helix</keyword>
<comment type="catalytic activity">
    <reaction>
        <text>a 1,2-diacyl-sn-glycero-3-phosphate + CTP + H(+) = a CDP-1,2-diacyl-sn-glycerol + diphosphate</text>
        <dbReference type="Rhea" id="RHEA:16229"/>
        <dbReference type="ChEBI" id="CHEBI:15378"/>
        <dbReference type="ChEBI" id="CHEBI:33019"/>
        <dbReference type="ChEBI" id="CHEBI:37563"/>
        <dbReference type="ChEBI" id="CHEBI:58332"/>
        <dbReference type="ChEBI" id="CHEBI:58608"/>
        <dbReference type="EC" id="2.7.7.41"/>
    </reaction>
</comment>
<comment type="pathway">
    <text>Phospholipid metabolism; CDP-diacylglycerol biosynthesis; CDP-diacylglycerol from sn-glycerol 3-phosphate: step 3/3.</text>
</comment>
<comment type="subcellular location">
    <subcellularLocation>
        <location evidence="3">Membrane</location>
        <topology evidence="3">Multi-pass membrane protein</topology>
    </subcellularLocation>
</comment>
<comment type="similarity">
    <text evidence="3">Belongs to the CDS family.</text>
</comment>
<feature type="chain" id="PRO_0000327387" description="Probable phosphatidate cytidylyltransferase">
    <location>
        <begin position="1"/>
        <end position="479"/>
    </location>
</feature>
<feature type="topological domain" description="Cytoplasmic" evidence="1">
    <location>
        <begin position="1"/>
        <end position="108"/>
    </location>
</feature>
<feature type="transmembrane region" description="Helical" evidence="1">
    <location>
        <begin position="109"/>
        <end position="129"/>
    </location>
</feature>
<feature type="topological domain" description="Extracellular" evidence="1">
    <location>
        <begin position="130"/>
        <end position="159"/>
    </location>
</feature>
<feature type="transmembrane region" description="Helical" evidence="1">
    <location>
        <begin position="160"/>
        <end position="180"/>
    </location>
</feature>
<feature type="topological domain" description="Cytoplasmic" evidence="1">
    <location>
        <begin position="181"/>
        <end position="192"/>
    </location>
</feature>
<feature type="transmembrane region" description="Helical" evidence="1">
    <location>
        <begin position="193"/>
        <end position="213"/>
    </location>
</feature>
<feature type="topological domain" description="Extracellular" evidence="1">
    <location>
        <begin position="214"/>
        <end position="240"/>
    </location>
</feature>
<feature type="transmembrane region" description="Helical" evidence="1">
    <location>
        <begin position="241"/>
        <end position="261"/>
    </location>
</feature>
<feature type="topological domain" description="Cytoplasmic" evidence="1">
    <location>
        <begin position="262"/>
        <end position="293"/>
    </location>
</feature>
<feature type="transmembrane region" description="Helical" evidence="1">
    <location>
        <begin position="294"/>
        <end position="314"/>
    </location>
</feature>
<feature type="topological domain" description="Extracellular" evidence="1">
    <location>
        <begin position="315"/>
        <end position="375"/>
    </location>
</feature>
<feature type="transmembrane region" description="Helical" evidence="1">
    <location>
        <begin position="376"/>
        <end position="396"/>
    </location>
</feature>
<feature type="topological domain" description="Cytoplasmic" evidence="1">
    <location>
        <begin position="397"/>
        <end position="479"/>
    </location>
</feature>
<feature type="region of interest" description="Disordered" evidence="2">
    <location>
        <begin position="1"/>
        <end position="71"/>
    </location>
</feature>
<feature type="compositionally biased region" description="Basic and acidic residues" evidence="2">
    <location>
        <begin position="1"/>
        <end position="28"/>
    </location>
</feature>
<feature type="compositionally biased region" description="Low complexity" evidence="2">
    <location>
        <begin position="53"/>
        <end position="69"/>
    </location>
</feature>
<name>CDSA_DICDI</name>
<organism>
    <name type="scientific">Dictyostelium discoideum</name>
    <name type="common">Social amoeba</name>
    <dbReference type="NCBI Taxonomy" id="44689"/>
    <lineage>
        <taxon>Eukaryota</taxon>
        <taxon>Amoebozoa</taxon>
        <taxon>Evosea</taxon>
        <taxon>Eumycetozoa</taxon>
        <taxon>Dictyostelia</taxon>
        <taxon>Dictyosteliales</taxon>
        <taxon>Dictyosteliaceae</taxon>
        <taxon>Dictyostelium</taxon>
    </lineage>
</organism>
<reference key="1">
    <citation type="journal article" date="2005" name="Nature">
        <title>The genome of the social amoeba Dictyostelium discoideum.</title>
        <authorList>
            <person name="Eichinger L."/>
            <person name="Pachebat J.A."/>
            <person name="Gloeckner G."/>
            <person name="Rajandream M.A."/>
            <person name="Sucgang R."/>
            <person name="Berriman M."/>
            <person name="Song J."/>
            <person name="Olsen R."/>
            <person name="Szafranski K."/>
            <person name="Xu Q."/>
            <person name="Tunggal B."/>
            <person name="Kummerfeld S."/>
            <person name="Madera M."/>
            <person name="Konfortov B.A."/>
            <person name="Rivero F."/>
            <person name="Bankier A.T."/>
            <person name="Lehmann R."/>
            <person name="Hamlin N."/>
            <person name="Davies R."/>
            <person name="Gaudet P."/>
            <person name="Fey P."/>
            <person name="Pilcher K."/>
            <person name="Chen G."/>
            <person name="Saunders D."/>
            <person name="Sodergren E.J."/>
            <person name="Davis P."/>
            <person name="Kerhornou A."/>
            <person name="Nie X."/>
            <person name="Hall N."/>
            <person name="Anjard C."/>
            <person name="Hemphill L."/>
            <person name="Bason N."/>
            <person name="Farbrother P."/>
            <person name="Desany B."/>
            <person name="Just E."/>
            <person name="Morio T."/>
            <person name="Rost R."/>
            <person name="Churcher C.M."/>
            <person name="Cooper J."/>
            <person name="Haydock S."/>
            <person name="van Driessche N."/>
            <person name="Cronin A."/>
            <person name="Goodhead I."/>
            <person name="Muzny D.M."/>
            <person name="Mourier T."/>
            <person name="Pain A."/>
            <person name="Lu M."/>
            <person name="Harper D."/>
            <person name="Lindsay R."/>
            <person name="Hauser H."/>
            <person name="James K.D."/>
            <person name="Quiles M."/>
            <person name="Madan Babu M."/>
            <person name="Saito T."/>
            <person name="Buchrieser C."/>
            <person name="Wardroper A."/>
            <person name="Felder M."/>
            <person name="Thangavelu M."/>
            <person name="Johnson D."/>
            <person name="Knights A."/>
            <person name="Loulseged H."/>
            <person name="Mungall K.L."/>
            <person name="Oliver K."/>
            <person name="Price C."/>
            <person name="Quail M.A."/>
            <person name="Urushihara H."/>
            <person name="Hernandez J."/>
            <person name="Rabbinowitsch E."/>
            <person name="Steffen D."/>
            <person name="Sanders M."/>
            <person name="Ma J."/>
            <person name="Kohara Y."/>
            <person name="Sharp S."/>
            <person name="Simmonds M.N."/>
            <person name="Spiegler S."/>
            <person name="Tivey A."/>
            <person name="Sugano S."/>
            <person name="White B."/>
            <person name="Walker D."/>
            <person name="Woodward J.R."/>
            <person name="Winckler T."/>
            <person name="Tanaka Y."/>
            <person name="Shaulsky G."/>
            <person name="Schleicher M."/>
            <person name="Weinstock G.M."/>
            <person name="Rosenthal A."/>
            <person name="Cox E.C."/>
            <person name="Chisholm R.L."/>
            <person name="Gibbs R.A."/>
            <person name="Loomis W.F."/>
            <person name="Platzer M."/>
            <person name="Kay R.R."/>
            <person name="Williams J.G."/>
            <person name="Dear P.H."/>
            <person name="Noegel A.A."/>
            <person name="Barrell B.G."/>
            <person name="Kuspa A."/>
        </authorList>
    </citation>
    <scope>NUCLEOTIDE SEQUENCE [LARGE SCALE GENOMIC DNA]</scope>
    <source>
        <strain>AX4</strain>
    </source>
</reference>
<accession>Q55D90</accession>
<gene>
    <name type="primary">cdsA</name>
    <name type="ORF">DDB_G0269742</name>
</gene>
<sequence length="479" mass="55732">MRTDNIRNRKEQLKKQEKKDFDSSKDEETSTSDEEESSGGNRSKIAGKENHQNKNIINQKTNNNNNNNNIKEKDIIDSSVNNADNLKATDPPSAKYKKLAIRSVMGAFMIGFFTIVLSTDHFIVALFVIALQLLVFKEMIALRYIEAKEKKIPHFRTLNWFFLFTSFFFFYAKPILITLANYYPDIFQHFVRYHLWHSFSLYCIGFVLFILTLRKGVYRYQFSQLTWTLMILMMVVVQSNFLISNIYQGLIWFILPVSIIVCNDIFAYFNGFFLGKKFINRPLMKISPNKTWEGFIGATGWTLLFAYYFCGFLLKYDWIVCPKGNTGFMESLHCTRDPVFLEKEFIFPPEITTIAFKYLGITLLPFTYIPIQFHALVLALFGSLIAPFGGFFASGIKRAYKVKDFDTIFPGHGGVTDRTDCQFIMGLFIHVYYNTFIKTLEIDPTFIWQNIMMLSMEEKMVIYEKLKQSIEFTTGTITA</sequence>
<dbReference type="EC" id="2.7.7.41"/>
<dbReference type="EMBL" id="AAFI02000005">
    <property type="protein sequence ID" value="EAL72221.1"/>
    <property type="molecule type" value="Genomic_DNA"/>
</dbReference>
<dbReference type="RefSeq" id="XP_646241.1">
    <property type="nucleotide sequence ID" value="XM_641149.1"/>
</dbReference>
<dbReference type="FunCoup" id="Q55D90">
    <property type="interactions" value="631"/>
</dbReference>
<dbReference type="STRING" id="44689.Q55D90"/>
<dbReference type="PaxDb" id="44689-DDB0233125"/>
<dbReference type="EnsemblProtists" id="EAL72221">
    <property type="protein sequence ID" value="EAL72221"/>
    <property type="gene ID" value="DDB_G0269742"/>
</dbReference>
<dbReference type="GeneID" id="8617197"/>
<dbReference type="KEGG" id="ddi:DDB_G0269742"/>
<dbReference type="dictyBase" id="DDB_G0269742">
    <property type="gene designation" value="cdsA"/>
</dbReference>
<dbReference type="VEuPathDB" id="AmoebaDB:DDB_G0269742"/>
<dbReference type="eggNOG" id="KOG1440">
    <property type="taxonomic scope" value="Eukaryota"/>
</dbReference>
<dbReference type="HOGENOM" id="CLU_023471_2_1_1"/>
<dbReference type="InParanoid" id="Q55D90"/>
<dbReference type="OMA" id="FFAYMYF"/>
<dbReference type="PhylomeDB" id="Q55D90"/>
<dbReference type="Reactome" id="R-DDI-1483148">
    <property type="pathway name" value="Synthesis of PG"/>
</dbReference>
<dbReference type="Reactome" id="R-DDI-1483226">
    <property type="pathway name" value="Synthesis of PI"/>
</dbReference>
<dbReference type="UniPathway" id="UPA00557">
    <property type="reaction ID" value="UER00614"/>
</dbReference>
<dbReference type="PRO" id="PR:Q55D90"/>
<dbReference type="Proteomes" id="UP000002195">
    <property type="component" value="Chromosome 1"/>
</dbReference>
<dbReference type="GO" id="GO:0005789">
    <property type="term" value="C:endoplasmic reticulum membrane"/>
    <property type="evidence" value="ECO:0000318"/>
    <property type="project" value="GO_Central"/>
</dbReference>
<dbReference type="GO" id="GO:0004605">
    <property type="term" value="F:phosphatidate cytidylyltransferase activity"/>
    <property type="evidence" value="ECO:0007669"/>
    <property type="project" value="UniProtKB-EC"/>
</dbReference>
<dbReference type="GO" id="GO:0016024">
    <property type="term" value="P:CDP-diacylglycerol biosynthetic process"/>
    <property type="evidence" value="ECO:0007669"/>
    <property type="project" value="UniProtKB-UniPathway"/>
</dbReference>
<dbReference type="InterPro" id="IPR016720">
    <property type="entry name" value="PC_Trfase_euk"/>
</dbReference>
<dbReference type="PANTHER" id="PTHR13773">
    <property type="entry name" value="PHOSPHATIDATE CYTIDYLYLTRANSFERASE"/>
    <property type="match status" value="1"/>
</dbReference>
<dbReference type="PANTHER" id="PTHR13773:SF8">
    <property type="entry name" value="PHOSPHATIDATE CYTIDYLYLTRANSFERASE, PHOTORECEPTOR-SPECIFIC"/>
    <property type="match status" value="1"/>
</dbReference>
<dbReference type="Pfam" id="PF01148">
    <property type="entry name" value="CTP_transf_1"/>
    <property type="match status" value="1"/>
</dbReference>
<dbReference type="PIRSF" id="PIRSF018269">
    <property type="entry name" value="PC_trans_euk"/>
    <property type="match status" value="1"/>
</dbReference>